<sequence length="260" mass="29345">MNENRLAIDILLLCISCGASALAGFSPTASSSLPATNLTDIGFAPPKYLTEAANIPKTRRKRYISQNDMLAILDYHNKVRGKVFPPASNMEYMVWDDTLAKTAEQWASTCIWEHGPRNLLRFLGQNLSVRTGRYRSILQLVKPWHDEVKDYSFPYPRDCNPRCPLKCYGPMCTHYTQMVWATSNKVGCAINTCHNMNVWGSVWKRATYLVCNYSPKGNWIGEAPYKVGVPCSMCPPSYGGSCSNNMCFPAVNSNYLHWFK</sequence>
<reference key="1">
    <citation type="journal article" date="2013" name="Nature">
        <title>The zebrafish reference genome sequence and its relationship to the human genome.</title>
        <authorList>
            <person name="Howe K."/>
            <person name="Clark M.D."/>
            <person name="Torroja C.F."/>
            <person name="Torrance J."/>
            <person name="Berthelot C."/>
            <person name="Muffato M."/>
            <person name="Collins J.E."/>
            <person name="Humphray S."/>
            <person name="McLaren K."/>
            <person name="Matthews L."/>
            <person name="McLaren S."/>
            <person name="Sealy I."/>
            <person name="Caccamo M."/>
            <person name="Churcher C."/>
            <person name="Scott C."/>
            <person name="Barrett J.C."/>
            <person name="Koch R."/>
            <person name="Rauch G.J."/>
            <person name="White S."/>
            <person name="Chow W."/>
            <person name="Kilian B."/>
            <person name="Quintais L.T."/>
            <person name="Guerra-Assuncao J.A."/>
            <person name="Zhou Y."/>
            <person name="Gu Y."/>
            <person name="Yen J."/>
            <person name="Vogel J.H."/>
            <person name="Eyre T."/>
            <person name="Redmond S."/>
            <person name="Banerjee R."/>
            <person name="Chi J."/>
            <person name="Fu B."/>
            <person name="Langley E."/>
            <person name="Maguire S.F."/>
            <person name="Laird G.K."/>
            <person name="Lloyd D."/>
            <person name="Kenyon E."/>
            <person name="Donaldson S."/>
            <person name="Sehra H."/>
            <person name="Almeida-King J."/>
            <person name="Loveland J."/>
            <person name="Trevanion S."/>
            <person name="Jones M."/>
            <person name="Quail M."/>
            <person name="Willey D."/>
            <person name="Hunt A."/>
            <person name="Burton J."/>
            <person name="Sims S."/>
            <person name="McLay K."/>
            <person name="Plumb B."/>
            <person name="Davis J."/>
            <person name="Clee C."/>
            <person name="Oliver K."/>
            <person name="Clark R."/>
            <person name="Riddle C."/>
            <person name="Elliot D."/>
            <person name="Threadgold G."/>
            <person name="Harden G."/>
            <person name="Ware D."/>
            <person name="Begum S."/>
            <person name="Mortimore B."/>
            <person name="Kerry G."/>
            <person name="Heath P."/>
            <person name="Phillimore B."/>
            <person name="Tracey A."/>
            <person name="Corby N."/>
            <person name="Dunn M."/>
            <person name="Johnson C."/>
            <person name="Wood J."/>
            <person name="Clark S."/>
            <person name="Pelan S."/>
            <person name="Griffiths G."/>
            <person name="Smith M."/>
            <person name="Glithero R."/>
            <person name="Howden P."/>
            <person name="Barker N."/>
            <person name="Lloyd C."/>
            <person name="Stevens C."/>
            <person name="Harley J."/>
            <person name="Holt K."/>
            <person name="Panagiotidis G."/>
            <person name="Lovell J."/>
            <person name="Beasley H."/>
            <person name="Henderson C."/>
            <person name="Gordon D."/>
            <person name="Auger K."/>
            <person name="Wright D."/>
            <person name="Collins J."/>
            <person name="Raisen C."/>
            <person name="Dyer L."/>
            <person name="Leung K."/>
            <person name="Robertson L."/>
            <person name="Ambridge K."/>
            <person name="Leongamornlert D."/>
            <person name="McGuire S."/>
            <person name="Gilderthorp R."/>
            <person name="Griffiths C."/>
            <person name="Manthravadi D."/>
            <person name="Nichol S."/>
            <person name="Barker G."/>
            <person name="Whitehead S."/>
            <person name="Kay M."/>
            <person name="Brown J."/>
            <person name="Murnane C."/>
            <person name="Gray E."/>
            <person name="Humphries M."/>
            <person name="Sycamore N."/>
            <person name="Barker D."/>
            <person name="Saunders D."/>
            <person name="Wallis J."/>
            <person name="Babbage A."/>
            <person name="Hammond S."/>
            <person name="Mashreghi-Mohammadi M."/>
            <person name="Barr L."/>
            <person name="Martin S."/>
            <person name="Wray P."/>
            <person name="Ellington A."/>
            <person name="Matthews N."/>
            <person name="Ellwood M."/>
            <person name="Woodmansey R."/>
            <person name="Clark G."/>
            <person name="Cooper J."/>
            <person name="Tromans A."/>
            <person name="Grafham D."/>
            <person name="Skuce C."/>
            <person name="Pandian R."/>
            <person name="Andrews R."/>
            <person name="Harrison E."/>
            <person name="Kimberley A."/>
            <person name="Garnett J."/>
            <person name="Fosker N."/>
            <person name="Hall R."/>
            <person name="Garner P."/>
            <person name="Kelly D."/>
            <person name="Bird C."/>
            <person name="Palmer S."/>
            <person name="Gehring I."/>
            <person name="Berger A."/>
            <person name="Dooley C.M."/>
            <person name="Ersan-Urun Z."/>
            <person name="Eser C."/>
            <person name="Geiger H."/>
            <person name="Geisler M."/>
            <person name="Karotki L."/>
            <person name="Kirn A."/>
            <person name="Konantz J."/>
            <person name="Konantz M."/>
            <person name="Oberlander M."/>
            <person name="Rudolph-Geiger S."/>
            <person name="Teucke M."/>
            <person name="Lanz C."/>
            <person name="Raddatz G."/>
            <person name="Osoegawa K."/>
            <person name="Zhu B."/>
            <person name="Rapp A."/>
            <person name="Widaa S."/>
            <person name="Langford C."/>
            <person name="Yang F."/>
            <person name="Schuster S.C."/>
            <person name="Carter N.P."/>
            <person name="Harrow J."/>
            <person name="Ning Z."/>
            <person name="Herrero J."/>
            <person name="Searle S.M."/>
            <person name="Enright A."/>
            <person name="Geisler R."/>
            <person name="Plasterk R.H."/>
            <person name="Lee C."/>
            <person name="Westerfield M."/>
            <person name="de Jong P.J."/>
            <person name="Zon L.I."/>
            <person name="Postlethwait J.H."/>
            <person name="Nusslein-Volhard C."/>
            <person name="Hubbard T.J."/>
            <person name="Roest Crollius H."/>
            <person name="Rogers J."/>
            <person name="Stemple D.L."/>
        </authorList>
    </citation>
    <scope>NUCLEOTIDE SEQUENCE [LARGE SCALE GENOMIC DNA]</scope>
    <source>
        <strain>Tuebingen</strain>
    </source>
</reference>
<name>PI15A_DANRE</name>
<comment type="function">
    <text evidence="1 2">Serine protease inhibitor which displays weak inhibitory activity against trypsin (By similarity). May play a role in facial patterning during embryonic development (By similarity).</text>
</comment>
<comment type="subcellular location">
    <subcellularLocation>
        <location evidence="1">Secreted</location>
    </subcellularLocation>
</comment>
<comment type="similarity">
    <text evidence="4">Belongs to the CRISP family.</text>
</comment>
<comment type="sequence caution" evidence="4">
    <conflict type="erroneous gene model prediction">
        <sequence resource="EMBL-CDS" id="CAE17614"/>
    </conflict>
</comment>
<keyword id="KW-0217">Developmental protein</keyword>
<keyword id="KW-0325">Glycoprotein</keyword>
<keyword id="KW-0646">Protease inhibitor</keyword>
<keyword id="KW-1185">Reference proteome</keyword>
<keyword id="KW-0964">Secreted</keyword>
<keyword id="KW-0732">Signal</keyword>
<organism>
    <name type="scientific">Danio rerio</name>
    <name type="common">Zebrafish</name>
    <name type="synonym">Brachydanio rerio</name>
    <dbReference type="NCBI Taxonomy" id="7955"/>
    <lineage>
        <taxon>Eukaryota</taxon>
        <taxon>Metazoa</taxon>
        <taxon>Chordata</taxon>
        <taxon>Craniata</taxon>
        <taxon>Vertebrata</taxon>
        <taxon>Euteleostomi</taxon>
        <taxon>Actinopterygii</taxon>
        <taxon>Neopterygii</taxon>
        <taxon>Teleostei</taxon>
        <taxon>Ostariophysi</taxon>
        <taxon>Cypriniformes</taxon>
        <taxon>Danionidae</taxon>
        <taxon>Danioninae</taxon>
        <taxon>Danio</taxon>
    </lineage>
</organism>
<accession>Q7T141</accession>
<protein>
    <recommendedName>
        <fullName>Peptidase inhibitor 15-A</fullName>
    </recommendedName>
</protein>
<evidence type="ECO:0000250" key="1">
    <source>
        <dbReference type="UniProtKB" id="O43692"/>
    </source>
</evidence>
<evidence type="ECO:0000250" key="2">
    <source>
        <dbReference type="UniProtKB" id="Q98ST6"/>
    </source>
</evidence>
<evidence type="ECO:0000255" key="3"/>
<evidence type="ECO:0000305" key="4"/>
<proteinExistence type="inferred from homology"/>
<feature type="signal peptide" evidence="3">
    <location>
        <begin position="1"/>
        <end position="21"/>
    </location>
</feature>
<feature type="propeptide" id="PRO_0000287628" evidence="1">
    <location>
        <begin position="22"/>
        <end position="62"/>
    </location>
</feature>
<feature type="chain" id="PRO_0000287629" description="Peptidase inhibitor 15-A">
    <location>
        <begin position="63"/>
        <end position="260"/>
    </location>
</feature>
<feature type="domain" description="SCP">
    <location>
        <begin position="73"/>
        <end position="213"/>
    </location>
</feature>
<feature type="glycosylation site" description="N-linked (GlcNAc...) asparagine" evidence="3">
    <location>
        <position position="37"/>
    </location>
</feature>
<feature type="glycosylation site" description="N-linked (GlcNAc...) asparagine" evidence="3">
    <location>
        <position position="126"/>
    </location>
</feature>
<dbReference type="EMBL" id="AL627168">
    <property type="protein sequence ID" value="CAE17614.1"/>
    <property type="status" value="ALT_SEQ"/>
    <property type="molecule type" value="Genomic_DNA"/>
</dbReference>
<dbReference type="RefSeq" id="NP_001153449.1">
    <property type="nucleotide sequence ID" value="NM_001159977.1"/>
</dbReference>
<dbReference type="SMR" id="Q7T141"/>
<dbReference type="FunCoup" id="Q7T141">
    <property type="interactions" value="34"/>
</dbReference>
<dbReference type="STRING" id="7955.ENSDARP00000117953"/>
<dbReference type="GlyCosmos" id="Q7T141">
    <property type="glycosylation" value="2 sites, No reported glycans"/>
</dbReference>
<dbReference type="PaxDb" id="7955-ENSDARP00000117953"/>
<dbReference type="Ensembl" id="ENSDART00000141620">
    <property type="protein sequence ID" value="ENSDARP00000117953"/>
    <property type="gene ID" value="ENSDARG00000045378"/>
</dbReference>
<dbReference type="GeneID" id="561978"/>
<dbReference type="KEGG" id="dre:561978"/>
<dbReference type="AGR" id="ZFIN:ZDB-GENE-040724-135"/>
<dbReference type="CTD" id="561978"/>
<dbReference type="ZFIN" id="ZDB-GENE-040724-135">
    <property type="gene designation" value="pi15a"/>
</dbReference>
<dbReference type="eggNOG" id="KOG3017">
    <property type="taxonomic scope" value="Eukaryota"/>
</dbReference>
<dbReference type="HOGENOM" id="CLU_035730_2_2_1"/>
<dbReference type="InParanoid" id="Q7T141"/>
<dbReference type="OMA" id="IWEHGPR"/>
<dbReference type="OrthoDB" id="414826at2759"/>
<dbReference type="PhylomeDB" id="Q7T141"/>
<dbReference type="TreeFam" id="TF316148"/>
<dbReference type="PRO" id="PR:Q7T141"/>
<dbReference type="Proteomes" id="UP000000437">
    <property type="component" value="Chromosome 24"/>
</dbReference>
<dbReference type="Bgee" id="ENSDARG00000045378">
    <property type="expression patterns" value="Expressed in swim bladder and 11 other cell types or tissues"/>
</dbReference>
<dbReference type="GO" id="GO:0005615">
    <property type="term" value="C:extracellular space"/>
    <property type="evidence" value="ECO:0000318"/>
    <property type="project" value="GO_Central"/>
</dbReference>
<dbReference type="GO" id="GO:0030414">
    <property type="term" value="F:peptidase inhibitor activity"/>
    <property type="evidence" value="ECO:0007669"/>
    <property type="project" value="UniProtKB-KW"/>
</dbReference>
<dbReference type="FunFam" id="3.40.33.10:FF:000003">
    <property type="entry name" value="Peptidase inhibitor 15"/>
    <property type="match status" value="1"/>
</dbReference>
<dbReference type="Gene3D" id="3.40.33.10">
    <property type="entry name" value="CAP"/>
    <property type="match status" value="1"/>
</dbReference>
<dbReference type="InterPro" id="IPR018244">
    <property type="entry name" value="Allrgn_V5/Tpx1_CS"/>
</dbReference>
<dbReference type="InterPro" id="IPR014044">
    <property type="entry name" value="CAP_dom"/>
</dbReference>
<dbReference type="InterPro" id="IPR035940">
    <property type="entry name" value="CAP_sf"/>
</dbReference>
<dbReference type="InterPro" id="IPR001283">
    <property type="entry name" value="CRISP-related"/>
</dbReference>
<dbReference type="PANTHER" id="PTHR10334">
    <property type="entry name" value="CYSTEINE-RICH SECRETORY PROTEIN-RELATED"/>
    <property type="match status" value="1"/>
</dbReference>
<dbReference type="Pfam" id="PF00188">
    <property type="entry name" value="CAP"/>
    <property type="match status" value="1"/>
</dbReference>
<dbReference type="PRINTS" id="PR00837">
    <property type="entry name" value="V5TPXLIKE"/>
</dbReference>
<dbReference type="SMART" id="SM00198">
    <property type="entry name" value="SCP"/>
    <property type="match status" value="1"/>
</dbReference>
<dbReference type="SUPFAM" id="SSF55797">
    <property type="entry name" value="PR-1-like"/>
    <property type="match status" value="1"/>
</dbReference>
<dbReference type="PROSITE" id="PS01010">
    <property type="entry name" value="CRISP_2"/>
    <property type="match status" value="1"/>
</dbReference>
<gene>
    <name type="primary">pi15a</name>
    <name type="synonym">pi15</name>
    <name type="ORF">si:rp71-1m12.1</name>
</gene>